<gene>
    <name evidence="1" type="primary">serC</name>
    <name type="ordered locus">lpg1418</name>
</gene>
<sequence>MNSRVFNFGAGPAMLPEEILKEAQEEFLNWRNTGMSILEIGHRTPEIISLLSTAEQSLRELLNIPKNYHVLFLGGAARAQFAMIPMNLLRPGDDAAYFITGIWSKMAYHEANLLKKAYYLSSEEKEGFVSIPDYQKWELKSNTAYVYYTPNETINGVRFPYVPKTEGVPLVADMTSCLLSEPINIRQYGLIFAGAQKNIANAGLTVVIIHEELLQNQPEPVIPTMLNYKNHADHRSLYATPPVFNCYLASKMFEWIKKQGGIEELFQRNCLKAAKLYQYLDSTDFYLTPVSKEARSIMNVCFSLYYPDLEQKFLDMANERGLKALKGHRFTGGLRASLYNAMPMAGVDALIEFMSEFAKENG</sequence>
<keyword id="KW-0028">Amino-acid biosynthesis</keyword>
<keyword id="KW-0032">Aminotransferase</keyword>
<keyword id="KW-0963">Cytoplasm</keyword>
<keyword id="KW-0663">Pyridoxal phosphate</keyword>
<keyword id="KW-0664">Pyridoxine biosynthesis</keyword>
<keyword id="KW-1185">Reference proteome</keyword>
<keyword id="KW-0718">Serine biosynthesis</keyword>
<keyword id="KW-0808">Transferase</keyword>
<proteinExistence type="inferred from homology"/>
<protein>
    <recommendedName>
        <fullName evidence="1">Phosphoserine aminotransferase</fullName>
        <ecNumber evidence="1">2.6.1.52</ecNumber>
    </recommendedName>
    <alternativeName>
        <fullName evidence="1">Phosphohydroxythreonine aminotransferase</fullName>
        <shortName evidence="1">PSAT</shortName>
    </alternativeName>
</protein>
<organism>
    <name type="scientific">Legionella pneumophila subsp. pneumophila (strain Philadelphia 1 / ATCC 33152 / DSM 7513)</name>
    <dbReference type="NCBI Taxonomy" id="272624"/>
    <lineage>
        <taxon>Bacteria</taxon>
        <taxon>Pseudomonadati</taxon>
        <taxon>Pseudomonadota</taxon>
        <taxon>Gammaproteobacteria</taxon>
        <taxon>Legionellales</taxon>
        <taxon>Legionellaceae</taxon>
        <taxon>Legionella</taxon>
    </lineage>
</organism>
<comment type="function">
    <text evidence="1">Catalyzes the reversible conversion of 3-phosphohydroxypyruvate to phosphoserine and of 3-hydroxy-2-oxo-4-phosphonooxybutanoate to phosphohydroxythreonine.</text>
</comment>
<comment type="catalytic activity">
    <reaction evidence="1">
        <text>O-phospho-L-serine + 2-oxoglutarate = 3-phosphooxypyruvate + L-glutamate</text>
        <dbReference type="Rhea" id="RHEA:14329"/>
        <dbReference type="ChEBI" id="CHEBI:16810"/>
        <dbReference type="ChEBI" id="CHEBI:18110"/>
        <dbReference type="ChEBI" id="CHEBI:29985"/>
        <dbReference type="ChEBI" id="CHEBI:57524"/>
        <dbReference type="EC" id="2.6.1.52"/>
    </reaction>
</comment>
<comment type="catalytic activity">
    <reaction evidence="1">
        <text>4-(phosphooxy)-L-threonine + 2-oxoglutarate = (R)-3-hydroxy-2-oxo-4-phosphooxybutanoate + L-glutamate</text>
        <dbReference type="Rhea" id="RHEA:16573"/>
        <dbReference type="ChEBI" id="CHEBI:16810"/>
        <dbReference type="ChEBI" id="CHEBI:29985"/>
        <dbReference type="ChEBI" id="CHEBI:58452"/>
        <dbReference type="ChEBI" id="CHEBI:58538"/>
        <dbReference type="EC" id="2.6.1.52"/>
    </reaction>
</comment>
<comment type="cofactor">
    <cofactor evidence="1">
        <name>pyridoxal 5'-phosphate</name>
        <dbReference type="ChEBI" id="CHEBI:597326"/>
    </cofactor>
    <text evidence="1">Binds 1 pyridoxal phosphate per subunit.</text>
</comment>
<comment type="pathway">
    <text evidence="1">Amino-acid biosynthesis; L-serine biosynthesis; L-serine from 3-phospho-D-glycerate: step 2/3.</text>
</comment>
<comment type="pathway">
    <text evidence="1">Cofactor biosynthesis; pyridoxine 5'-phosphate biosynthesis; pyridoxine 5'-phosphate from D-erythrose 4-phosphate: step 3/5.</text>
</comment>
<comment type="subunit">
    <text evidence="1">Homodimer.</text>
</comment>
<comment type="subcellular location">
    <subcellularLocation>
        <location evidence="1">Cytoplasm</location>
    </subcellularLocation>
</comment>
<comment type="similarity">
    <text evidence="1">Belongs to the class-V pyridoxal-phosphate-dependent aminotransferase family. SerC subfamily.</text>
</comment>
<comment type="sequence caution" evidence="2">
    <conflict type="erroneous initiation">
        <sequence resource="EMBL-CDS" id="AAU27500"/>
    </conflict>
</comment>
<reference key="1">
    <citation type="journal article" date="2004" name="Science">
        <title>The genomic sequence of the accidental pathogen Legionella pneumophila.</title>
        <authorList>
            <person name="Chien M."/>
            <person name="Morozova I."/>
            <person name="Shi S."/>
            <person name="Sheng H."/>
            <person name="Chen J."/>
            <person name="Gomez S.M."/>
            <person name="Asamani G."/>
            <person name="Hill K."/>
            <person name="Nuara J."/>
            <person name="Feder M."/>
            <person name="Rineer J."/>
            <person name="Greenberg J.J."/>
            <person name="Steshenko V."/>
            <person name="Park S.H."/>
            <person name="Zhao B."/>
            <person name="Teplitskaya E."/>
            <person name="Edwards J.R."/>
            <person name="Pampou S."/>
            <person name="Georghiou A."/>
            <person name="Chou I.-C."/>
            <person name="Iannuccilli W."/>
            <person name="Ulz M.E."/>
            <person name="Kim D.H."/>
            <person name="Geringer-Sameth A."/>
            <person name="Goldsberry C."/>
            <person name="Morozov P."/>
            <person name="Fischer S.G."/>
            <person name="Segal G."/>
            <person name="Qu X."/>
            <person name="Rzhetsky A."/>
            <person name="Zhang P."/>
            <person name="Cayanis E."/>
            <person name="De Jong P.J."/>
            <person name="Ju J."/>
            <person name="Kalachikov S."/>
            <person name="Shuman H.A."/>
            <person name="Russo J.J."/>
        </authorList>
    </citation>
    <scope>NUCLEOTIDE SEQUENCE [LARGE SCALE GENOMIC DNA]</scope>
    <source>
        <strain>Philadelphia 1 / ATCC 33152 / DSM 7513</strain>
    </source>
</reference>
<feature type="chain" id="PRO_0000150179" description="Phosphoserine aminotransferase">
    <location>
        <begin position="1"/>
        <end position="362"/>
    </location>
</feature>
<feature type="binding site" evidence="1">
    <location>
        <position position="43"/>
    </location>
    <ligand>
        <name>L-glutamate</name>
        <dbReference type="ChEBI" id="CHEBI:29985"/>
    </ligand>
</feature>
<feature type="binding site" evidence="1">
    <location>
        <begin position="77"/>
        <end position="78"/>
    </location>
    <ligand>
        <name>pyridoxal 5'-phosphate</name>
        <dbReference type="ChEBI" id="CHEBI:597326"/>
    </ligand>
</feature>
<feature type="binding site" evidence="1">
    <location>
        <position position="103"/>
    </location>
    <ligand>
        <name>pyridoxal 5'-phosphate</name>
        <dbReference type="ChEBI" id="CHEBI:597326"/>
    </ligand>
</feature>
<feature type="binding site" evidence="1">
    <location>
        <position position="153"/>
    </location>
    <ligand>
        <name>pyridoxal 5'-phosphate</name>
        <dbReference type="ChEBI" id="CHEBI:597326"/>
    </ligand>
</feature>
<feature type="binding site" evidence="1">
    <location>
        <position position="173"/>
    </location>
    <ligand>
        <name>pyridoxal 5'-phosphate</name>
        <dbReference type="ChEBI" id="CHEBI:597326"/>
    </ligand>
</feature>
<feature type="binding site" evidence="1">
    <location>
        <position position="196"/>
    </location>
    <ligand>
        <name>pyridoxal 5'-phosphate</name>
        <dbReference type="ChEBI" id="CHEBI:597326"/>
    </ligand>
</feature>
<feature type="modified residue" description="N6-(pyridoxal phosphate)lysine" evidence="1">
    <location>
        <position position="197"/>
    </location>
</feature>
<dbReference type="EC" id="2.6.1.52" evidence="1"/>
<dbReference type="EMBL" id="AE017354">
    <property type="protein sequence ID" value="AAU27500.1"/>
    <property type="status" value="ALT_INIT"/>
    <property type="molecule type" value="Genomic_DNA"/>
</dbReference>
<dbReference type="RefSeq" id="WP_015444522.1">
    <property type="nucleotide sequence ID" value="NC_002942.5"/>
</dbReference>
<dbReference type="RefSeq" id="YP_095447.1">
    <property type="nucleotide sequence ID" value="NC_002942.5"/>
</dbReference>
<dbReference type="SMR" id="Q5ZVM2"/>
<dbReference type="STRING" id="272624.lpg1418"/>
<dbReference type="PaxDb" id="272624-lpg1418"/>
<dbReference type="GeneID" id="57035408"/>
<dbReference type="KEGG" id="lpn:lpg1418"/>
<dbReference type="PATRIC" id="fig|272624.6.peg.1488"/>
<dbReference type="eggNOG" id="COG1932">
    <property type="taxonomic scope" value="Bacteria"/>
</dbReference>
<dbReference type="HOGENOM" id="CLU_034866_0_2_6"/>
<dbReference type="OrthoDB" id="9809412at2"/>
<dbReference type="UniPathway" id="UPA00135">
    <property type="reaction ID" value="UER00197"/>
</dbReference>
<dbReference type="UniPathway" id="UPA00244">
    <property type="reaction ID" value="UER00311"/>
</dbReference>
<dbReference type="Proteomes" id="UP000000609">
    <property type="component" value="Chromosome"/>
</dbReference>
<dbReference type="GO" id="GO:0005737">
    <property type="term" value="C:cytoplasm"/>
    <property type="evidence" value="ECO:0007669"/>
    <property type="project" value="UniProtKB-SubCell"/>
</dbReference>
<dbReference type="GO" id="GO:0004648">
    <property type="term" value="F:O-phospho-L-serine:2-oxoglutarate aminotransferase activity"/>
    <property type="evidence" value="ECO:0007669"/>
    <property type="project" value="UniProtKB-UniRule"/>
</dbReference>
<dbReference type="GO" id="GO:0030170">
    <property type="term" value="F:pyridoxal phosphate binding"/>
    <property type="evidence" value="ECO:0007669"/>
    <property type="project" value="UniProtKB-UniRule"/>
</dbReference>
<dbReference type="GO" id="GO:0006564">
    <property type="term" value="P:L-serine biosynthetic process"/>
    <property type="evidence" value="ECO:0007669"/>
    <property type="project" value="UniProtKB-UniRule"/>
</dbReference>
<dbReference type="GO" id="GO:0008615">
    <property type="term" value="P:pyridoxine biosynthetic process"/>
    <property type="evidence" value="ECO:0007669"/>
    <property type="project" value="UniProtKB-UniRule"/>
</dbReference>
<dbReference type="FunFam" id="3.40.640.10:FF:000010">
    <property type="entry name" value="Phosphoserine aminotransferase"/>
    <property type="match status" value="1"/>
</dbReference>
<dbReference type="FunFam" id="3.90.1150.10:FF:000006">
    <property type="entry name" value="Phosphoserine aminotransferase"/>
    <property type="match status" value="1"/>
</dbReference>
<dbReference type="Gene3D" id="3.90.1150.10">
    <property type="entry name" value="Aspartate Aminotransferase, domain 1"/>
    <property type="match status" value="1"/>
</dbReference>
<dbReference type="Gene3D" id="3.40.640.10">
    <property type="entry name" value="Type I PLP-dependent aspartate aminotransferase-like (Major domain)"/>
    <property type="match status" value="1"/>
</dbReference>
<dbReference type="HAMAP" id="MF_00160">
    <property type="entry name" value="SerC_aminotrans_5"/>
    <property type="match status" value="1"/>
</dbReference>
<dbReference type="InterPro" id="IPR000192">
    <property type="entry name" value="Aminotrans_V_dom"/>
</dbReference>
<dbReference type="InterPro" id="IPR020578">
    <property type="entry name" value="Aminotrans_V_PyrdxlP_BS"/>
</dbReference>
<dbReference type="InterPro" id="IPR022278">
    <property type="entry name" value="Pser_aminoTfrase"/>
</dbReference>
<dbReference type="InterPro" id="IPR015424">
    <property type="entry name" value="PyrdxlP-dep_Trfase"/>
</dbReference>
<dbReference type="InterPro" id="IPR015421">
    <property type="entry name" value="PyrdxlP-dep_Trfase_major"/>
</dbReference>
<dbReference type="InterPro" id="IPR015422">
    <property type="entry name" value="PyrdxlP-dep_Trfase_small"/>
</dbReference>
<dbReference type="NCBIfam" id="NF003764">
    <property type="entry name" value="PRK05355.1"/>
    <property type="match status" value="1"/>
</dbReference>
<dbReference type="NCBIfam" id="TIGR01364">
    <property type="entry name" value="serC_1"/>
    <property type="match status" value="1"/>
</dbReference>
<dbReference type="PANTHER" id="PTHR43247">
    <property type="entry name" value="PHOSPHOSERINE AMINOTRANSFERASE"/>
    <property type="match status" value="1"/>
</dbReference>
<dbReference type="PANTHER" id="PTHR43247:SF1">
    <property type="entry name" value="PHOSPHOSERINE AMINOTRANSFERASE"/>
    <property type="match status" value="1"/>
</dbReference>
<dbReference type="Pfam" id="PF00266">
    <property type="entry name" value="Aminotran_5"/>
    <property type="match status" value="1"/>
</dbReference>
<dbReference type="PIRSF" id="PIRSF000525">
    <property type="entry name" value="SerC"/>
    <property type="match status" value="1"/>
</dbReference>
<dbReference type="SUPFAM" id="SSF53383">
    <property type="entry name" value="PLP-dependent transferases"/>
    <property type="match status" value="1"/>
</dbReference>
<dbReference type="PROSITE" id="PS00595">
    <property type="entry name" value="AA_TRANSFER_CLASS_5"/>
    <property type="match status" value="1"/>
</dbReference>
<name>SERC_LEGPH</name>
<accession>Q5ZVM2</accession>
<evidence type="ECO:0000255" key="1">
    <source>
        <dbReference type="HAMAP-Rule" id="MF_00160"/>
    </source>
</evidence>
<evidence type="ECO:0000305" key="2"/>